<sequence>MRVPFNDKVWAGRSDDGEAGDTRRVFNQVTPFGSAVRVQHDAPVIVGFSSDEGVRRNQGRIGAAHAPMELRRVLAGLPAKTAMVALADAGDVVCDDGDLEAAQAELADVVSEVLAGGGRPLVLGGGHEVAWGTYSGLRLHQQREAENEATLLISRKLLIINFDAHFDLRQKRPANSGTPFDQIALDCAERGVPFNYACFGISDLSNTASLFAHAERLGVHYVFDVDMQETQLPQRLNELQKLLDAADDVYLTIDLDVLPAATAPGVSAPAALGVPLSVIEAMVLRVRASGKLRVADIAEYNPTLDQDRRTARVAARLAYRLL</sequence>
<reference key="1">
    <citation type="journal article" date="2006" name="Proc. Natl. Acad. Sci. U.S.A.">
        <title>Burkholderia xenovorans LB400 harbors a multi-replicon, 9.73-Mbp genome shaped for versatility.</title>
        <authorList>
            <person name="Chain P.S.G."/>
            <person name="Denef V.J."/>
            <person name="Konstantinidis K.T."/>
            <person name="Vergez L.M."/>
            <person name="Agullo L."/>
            <person name="Reyes V.L."/>
            <person name="Hauser L."/>
            <person name="Cordova M."/>
            <person name="Gomez L."/>
            <person name="Gonzalez M."/>
            <person name="Land M."/>
            <person name="Lao V."/>
            <person name="Larimer F."/>
            <person name="LiPuma J.J."/>
            <person name="Mahenthiralingam E."/>
            <person name="Malfatti S.A."/>
            <person name="Marx C.J."/>
            <person name="Parnell J.J."/>
            <person name="Ramette A."/>
            <person name="Richardson P."/>
            <person name="Seeger M."/>
            <person name="Smith D."/>
            <person name="Spilker T."/>
            <person name="Sul W.J."/>
            <person name="Tsoi T.V."/>
            <person name="Ulrich L.E."/>
            <person name="Zhulin I.B."/>
            <person name="Tiedje J.M."/>
        </authorList>
    </citation>
    <scope>NUCLEOTIDE SEQUENCE [LARGE SCALE GENOMIC DNA]</scope>
    <source>
        <strain>LB400</strain>
    </source>
</reference>
<gene>
    <name evidence="1" type="primary">hutG</name>
    <name type="ordered locus">Bxeno_B0971</name>
    <name type="ORF">Bxe_B2046</name>
</gene>
<feature type="chain" id="PRO_0000258252" description="Formimidoylglutamase">
    <location>
        <begin position="1"/>
        <end position="322"/>
    </location>
</feature>
<feature type="binding site" evidence="1">
    <location>
        <position position="127"/>
    </location>
    <ligand>
        <name>Mn(2+)</name>
        <dbReference type="ChEBI" id="CHEBI:29035"/>
        <label>1</label>
    </ligand>
</feature>
<feature type="binding site" evidence="1">
    <location>
        <position position="163"/>
    </location>
    <ligand>
        <name>Mn(2+)</name>
        <dbReference type="ChEBI" id="CHEBI:29035"/>
        <label>1</label>
    </ligand>
</feature>
<feature type="binding site" evidence="1">
    <location>
        <position position="163"/>
    </location>
    <ligand>
        <name>Mn(2+)</name>
        <dbReference type="ChEBI" id="CHEBI:29035"/>
        <label>2</label>
    </ligand>
</feature>
<feature type="binding site" evidence="1">
    <location>
        <position position="165"/>
    </location>
    <ligand>
        <name>Mn(2+)</name>
        <dbReference type="ChEBI" id="CHEBI:29035"/>
        <label>2</label>
    </ligand>
</feature>
<feature type="binding site" evidence="1">
    <location>
        <position position="167"/>
    </location>
    <ligand>
        <name>Mn(2+)</name>
        <dbReference type="ChEBI" id="CHEBI:29035"/>
        <label>1</label>
    </ligand>
</feature>
<feature type="binding site" evidence="1">
    <location>
        <position position="254"/>
    </location>
    <ligand>
        <name>Mn(2+)</name>
        <dbReference type="ChEBI" id="CHEBI:29035"/>
        <label>1</label>
    </ligand>
</feature>
<feature type="binding site" evidence="1">
    <location>
        <position position="254"/>
    </location>
    <ligand>
        <name>Mn(2+)</name>
        <dbReference type="ChEBI" id="CHEBI:29035"/>
        <label>2</label>
    </ligand>
</feature>
<feature type="binding site" evidence="1">
    <location>
        <position position="256"/>
    </location>
    <ligand>
        <name>Mn(2+)</name>
        <dbReference type="ChEBI" id="CHEBI:29035"/>
        <label>2</label>
    </ligand>
</feature>
<organism>
    <name type="scientific">Paraburkholderia xenovorans (strain LB400)</name>
    <dbReference type="NCBI Taxonomy" id="266265"/>
    <lineage>
        <taxon>Bacteria</taxon>
        <taxon>Pseudomonadati</taxon>
        <taxon>Pseudomonadota</taxon>
        <taxon>Betaproteobacteria</taxon>
        <taxon>Burkholderiales</taxon>
        <taxon>Burkholderiaceae</taxon>
        <taxon>Paraburkholderia</taxon>
    </lineage>
</organism>
<protein>
    <recommendedName>
        <fullName evidence="1">Formimidoylglutamase</fullName>
        <ecNumber evidence="1">3.5.3.8</ecNumber>
    </recommendedName>
    <alternativeName>
        <fullName evidence="1">Formiminoglutamase</fullName>
    </alternativeName>
    <alternativeName>
        <fullName evidence="1">Formiminoglutamate hydrolase</fullName>
    </alternativeName>
</protein>
<keyword id="KW-0369">Histidine metabolism</keyword>
<keyword id="KW-0378">Hydrolase</keyword>
<keyword id="KW-0464">Manganese</keyword>
<keyword id="KW-0479">Metal-binding</keyword>
<keyword id="KW-1185">Reference proteome</keyword>
<dbReference type="EC" id="3.5.3.8" evidence="1"/>
<dbReference type="EMBL" id="CP000271">
    <property type="protein sequence ID" value="ABE33939.1"/>
    <property type="molecule type" value="Genomic_DNA"/>
</dbReference>
<dbReference type="RefSeq" id="WP_011491291.1">
    <property type="nucleotide sequence ID" value="NC_007952.1"/>
</dbReference>
<dbReference type="SMR" id="Q13PQ0"/>
<dbReference type="STRING" id="266265.Bxe_B2046"/>
<dbReference type="KEGG" id="bxb:DR64_7348"/>
<dbReference type="KEGG" id="bxe:Bxe_B2046"/>
<dbReference type="PATRIC" id="fig|266265.5.peg.5687"/>
<dbReference type="eggNOG" id="COG0010">
    <property type="taxonomic scope" value="Bacteria"/>
</dbReference>
<dbReference type="OrthoDB" id="9789727at2"/>
<dbReference type="UniPathway" id="UPA00379">
    <property type="reaction ID" value="UER00552"/>
</dbReference>
<dbReference type="Proteomes" id="UP000001817">
    <property type="component" value="Chromosome 2"/>
</dbReference>
<dbReference type="GO" id="GO:0008783">
    <property type="term" value="F:agmatinase activity"/>
    <property type="evidence" value="ECO:0007669"/>
    <property type="project" value="TreeGrafter"/>
</dbReference>
<dbReference type="GO" id="GO:0050415">
    <property type="term" value="F:formimidoylglutamase activity"/>
    <property type="evidence" value="ECO:0007669"/>
    <property type="project" value="UniProtKB-UniRule"/>
</dbReference>
<dbReference type="GO" id="GO:0030145">
    <property type="term" value="F:manganese ion binding"/>
    <property type="evidence" value="ECO:0007669"/>
    <property type="project" value="UniProtKB-UniRule"/>
</dbReference>
<dbReference type="GO" id="GO:0019556">
    <property type="term" value="P:L-histidine catabolic process to glutamate and formamide"/>
    <property type="evidence" value="ECO:0007669"/>
    <property type="project" value="UniProtKB-UniPathway"/>
</dbReference>
<dbReference type="GO" id="GO:0019557">
    <property type="term" value="P:L-histidine catabolic process to glutamate and formate"/>
    <property type="evidence" value="ECO:0007669"/>
    <property type="project" value="UniProtKB-UniPathway"/>
</dbReference>
<dbReference type="GO" id="GO:0033389">
    <property type="term" value="P:putrescine biosynthetic process from arginine, via agmatine"/>
    <property type="evidence" value="ECO:0007669"/>
    <property type="project" value="TreeGrafter"/>
</dbReference>
<dbReference type="CDD" id="cd09988">
    <property type="entry name" value="Formimidoylglutamase"/>
    <property type="match status" value="1"/>
</dbReference>
<dbReference type="Gene3D" id="3.40.800.10">
    <property type="entry name" value="Ureohydrolase domain"/>
    <property type="match status" value="1"/>
</dbReference>
<dbReference type="HAMAP" id="MF_00737">
    <property type="entry name" value="Formimidoylglutam"/>
    <property type="match status" value="1"/>
</dbReference>
<dbReference type="InterPro" id="IPR005923">
    <property type="entry name" value="HutG"/>
</dbReference>
<dbReference type="InterPro" id="IPR006035">
    <property type="entry name" value="Ureohydrolase"/>
</dbReference>
<dbReference type="InterPro" id="IPR023696">
    <property type="entry name" value="Ureohydrolase_dom_sf"/>
</dbReference>
<dbReference type="InterPro" id="IPR020855">
    <property type="entry name" value="Ureohydrolase_Mn_BS"/>
</dbReference>
<dbReference type="NCBIfam" id="TIGR01227">
    <property type="entry name" value="hutG"/>
    <property type="match status" value="1"/>
</dbReference>
<dbReference type="PANTHER" id="PTHR11358">
    <property type="entry name" value="ARGINASE/AGMATINASE"/>
    <property type="match status" value="1"/>
</dbReference>
<dbReference type="PANTHER" id="PTHR11358:SF35">
    <property type="entry name" value="FORMIMIDOYLGLUTAMASE"/>
    <property type="match status" value="1"/>
</dbReference>
<dbReference type="Pfam" id="PF00491">
    <property type="entry name" value="Arginase"/>
    <property type="match status" value="1"/>
</dbReference>
<dbReference type="PIRSF" id="PIRSF036979">
    <property type="entry name" value="Arginase"/>
    <property type="match status" value="1"/>
</dbReference>
<dbReference type="SUPFAM" id="SSF52768">
    <property type="entry name" value="Arginase/deacetylase"/>
    <property type="match status" value="1"/>
</dbReference>
<dbReference type="PROSITE" id="PS01053">
    <property type="entry name" value="ARGINASE_1"/>
    <property type="match status" value="1"/>
</dbReference>
<dbReference type="PROSITE" id="PS51409">
    <property type="entry name" value="ARGINASE_2"/>
    <property type="match status" value="1"/>
</dbReference>
<comment type="function">
    <text evidence="1">Catalyzes the conversion of N-formimidoyl-L-glutamate to L-glutamate and formamide.</text>
</comment>
<comment type="catalytic activity">
    <reaction evidence="1">
        <text>N-formimidoyl-L-glutamate + H2O = formamide + L-glutamate</text>
        <dbReference type="Rhea" id="RHEA:22492"/>
        <dbReference type="ChEBI" id="CHEBI:15377"/>
        <dbReference type="ChEBI" id="CHEBI:16397"/>
        <dbReference type="ChEBI" id="CHEBI:29985"/>
        <dbReference type="ChEBI" id="CHEBI:58928"/>
        <dbReference type="EC" id="3.5.3.8"/>
    </reaction>
</comment>
<comment type="cofactor">
    <cofactor evidence="1">
        <name>Mn(2+)</name>
        <dbReference type="ChEBI" id="CHEBI:29035"/>
    </cofactor>
    <text evidence="1">Binds 2 manganese ions per subunit.</text>
</comment>
<comment type="pathway">
    <text evidence="1">Amino-acid degradation; L-histidine degradation into L-glutamate; L-glutamate from N-formimidoyl-L-glutamate (hydrolase route): step 1/1.</text>
</comment>
<comment type="similarity">
    <text evidence="1">Belongs to the arginase family.</text>
</comment>
<accession>Q13PQ0</accession>
<proteinExistence type="inferred from homology"/>
<name>HUTG_PARXL</name>
<evidence type="ECO:0000255" key="1">
    <source>
        <dbReference type="HAMAP-Rule" id="MF_00737"/>
    </source>
</evidence>